<comment type="function">
    <text evidence="1">Presents weak hemolytic activity at physiological concentrations (micromolar range), and weak lactate dehydrogenase (LDH) release from mast cells. Does not induce mast cell degranulation, and antimicrobial effects. In vivo, injection into mice induces very weak or no change in nociceptive sensibility, and very reduced or no edema formation. It also reduces mice locomotion, suggesting an increase in anxiety, but causes no alteration in rearing (standing on hind limbs).</text>
</comment>
<comment type="subcellular location">
    <subcellularLocation>
        <location evidence="1">Secreted</location>
    </subcellularLocation>
</comment>
<comment type="tissue specificity">
    <text evidence="3">Expressed by the venom gland.</text>
</comment>
<organism>
    <name type="scientific">Tityus obscurus</name>
    <name type="common">Amazonian scorpion</name>
    <name type="synonym">Tityus cambridgei</name>
    <dbReference type="NCBI Taxonomy" id="1221240"/>
    <lineage>
        <taxon>Eukaryota</taxon>
        <taxon>Metazoa</taxon>
        <taxon>Ecdysozoa</taxon>
        <taxon>Arthropoda</taxon>
        <taxon>Chelicerata</taxon>
        <taxon>Arachnida</taxon>
        <taxon>Scorpiones</taxon>
        <taxon>Buthida</taxon>
        <taxon>Buthoidea</taxon>
        <taxon>Buthidae</taxon>
        <taxon>Tityus</taxon>
    </lineage>
</organism>
<sequence length="19" mass="1760">GCDALLSGDHGGLLSANGC</sequence>
<keyword id="KW-0204">Cytolysis</keyword>
<keyword id="KW-0903">Direct protein sequencing</keyword>
<keyword id="KW-0964">Secreted</keyword>
<accession>P0DRE7</accession>
<proteinExistence type="evidence at protein level"/>
<reference key="1">
    <citation type="journal article" date="2018" name="J. Proteomics">
        <title>Profiling the short, linear, non-disulfide bond-containing peptidome from the venom of the scorpion Tityus obscurus.</title>
        <authorList>
            <person name="Dias N.B."/>
            <person name="de Souza B.M."/>
            <person name="Cocchi F.K."/>
            <person name="Chalkidis H.M."/>
            <person name="Dorce V.A.C."/>
            <person name="Palma M.S."/>
        </authorList>
    </citation>
    <scope>PROTEIN SEQUENCE</scope>
    <scope>IDENTIFICATION BY MASS SPECTROMETRY</scope>
    <scope>SUBCELLULAR LOCATION</scope>
    <scope>SYNTHESIS</scope>
    <scope>FUNCTION</scope>
    <scope>BIOASSAY</scope>
    <source>
        <tissue>Venom</tissue>
    </source>
</reference>
<dbReference type="GO" id="GO:0005576">
    <property type="term" value="C:extracellular region"/>
    <property type="evidence" value="ECO:0007669"/>
    <property type="project" value="UniProtKB-SubCell"/>
</dbReference>
<dbReference type="GO" id="GO:0031640">
    <property type="term" value="P:killing of cells of another organism"/>
    <property type="evidence" value="ECO:0007669"/>
    <property type="project" value="UniProtKB-KW"/>
</dbReference>
<protein>
    <recommendedName>
        <fullName evidence="2">Cryptide Pep-2</fullName>
    </recommendedName>
</protein>
<name>CRY2_TITOB</name>
<evidence type="ECO:0000269" key="1">
    <source>
    </source>
</evidence>
<evidence type="ECO:0000303" key="2">
    <source>
    </source>
</evidence>
<evidence type="ECO:0000305" key="3">
    <source>
    </source>
</evidence>
<feature type="peptide" id="PRO_0000461737" description="Cryptide Pep-2" evidence="1">
    <location>
        <begin position="1"/>
        <end position="19"/>
    </location>
</feature>